<keyword id="KW-0997">Cell inner membrane</keyword>
<keyword id="KW-1003">Cell membrane</keyword>
<keyword id="KW-0285">Flavoprotein</keyword>
<keyword id="KW-0288">FMN</keyword>
<keyword id="KW-0472">Membrane</keyword>
<keyword id="KW-0520">NAD</keyword>
<keyword id="KW-0560">Oxidoreductase</keyword>
<protein>
    <recommendedName>
        <fullName evidence="1">Glutathione-regulated potassium-efflux system ancillary protein KefF</fullName>
    </recommendedName>
    <alternativeName>
        <fullName evidence="1">Quinone oxidoreductase KefF</fullName>
        <ecNumber evidence="1">1.6.5.2</ecNumber>
    </alternativeName>
</protein>
<sequence length="176" mass="20033">MILIIYAHPYPHHSHANKQMLEQAGTLENVEIRSLYHLYPDFNIDVAAEQEALSRASLIVWQHPMQWYSVPPLLKLWMDKVLTHGWAYGHGGTALHGKHLLWAVTTGGGENHFTIGSHPGFDVLSQPLQATALYCGLKWLPPFSMHCTFICDDDTLQAQARQYKQRLLAWQEVNHG</sequence>
<name>KEFF_SALEP</name>
<gene>
    <name evidence="1" type="primary">kefF</name>
    <name type="ordered locus">SEN0087</name>
</gene>
<accession>B5R1S3</accession>
<reference key="1">
    <citation type="journal article" date="2008" name="Genome Res.">
        <title>Comparative genome analysis of Salmonella enteritidis PT4 and Salmonella gallinarum 287/91 provides insights into evolutionary and host adaptation pathways.</title>
        <authorList>
            <person name="Thomson N.R."/>
            <person name="Clayton D.J."/>
            <person name="Windhorst D."/>
            <person name="Vernikos G."/>
            <person name="Davidson S."/>
            <person name="Churcher C."/>
            <person name="Quail M.A."/>
            <person name="Stevens M."/>
            <person name="Jones M.A."/>
            <person name="Watson M."/>
            <person name="Barron A."/>
            <person name="Layton A."/>
            <person name="Pickard D."/>
            <person name="Kingsley R.A."/>
            <person name="Bignell A."/>
            <person name="Clark L."/>
            <person name="Harris B."/>
            <person name="Ormond D."/>
            <person name="Abdellah Z."/>
            <person name="Brooks K."/>
            <person name="Cherevach I."/>
            <person name="Chillingworth T."/>
            <person name="Woodward J."/>
            <person name="Norberczak H."/>
            <person name="Lord A."/>
            <person name="Arrowsmith C."/>
            <person name="Jagels K."/>
            <person name="Moule S."/>
            <person name="Mungall K."/>
            <person name="Saunders M."/>
            <person name="Whitehead S."/>
            <person name="Chabalgoity J.A."/>
            <person name="Maskell D."/>
            <person name="Humphreys T."/>
            <person name="Roberts M."/>
            <person name="Barrow P.A."/>
            <person name="Dougan G."/>
            <person name="Parkhill J."/>
        </authorList>
    </citation>
    <scope>NUCLEOTIDE SEQUENCE [LARGE SCALE GENOMIC DNA]</scope>
    <source>
        <strain>P125109</strain>
    </source>
</reference>
<dbReference type="EC" id="1.6.5.2" evidence="1"/>
<dbReference type="EMBL" id="AM933172">
    <property type="protein sequence ID" value="CAR31674.1"/>
    <property type="molecule type" value="Genomic_DNA"/>
</dbReference>
<dbReference type="RefSeq" id="WP_000600698.1">
    <property type="nucleotide sequence ID" value="NC_011294.1"/>
</dbReference>
<dbReference type="SMR" id="B5R1S3"/>
<dbReference type="KEGG" id="set:SEN0087"/>
<dbReference type="HOGENOM" id="CLU_058643_0_2_6"/>
<dbReference type="Proteomes" id="UP000000613">
    <property type="component" value="Chromosome"/>
</dbReference>
<dbReference type="GO" id="GO:0005886">
    <property type="term" value="C:plasma membrane"/>
    <property type="evidence" value="ECO:0007669"/>
    <property type="project" value="UniProtKB-SubCell"/>
</dbReference>
<dbReference type="GO" id="GO:0009055">
    <property type="term" value="F:electron transfer activity"/>
    <property type="evidence" value="ECO:0007669"/>
    <property type="project" value="TreeGrafter"/>
</dbReference>
<dbReference type="GO" id="GO:0010181">
    <property type="term" value="F:FMN binding"/>
    <property type="evidence" value="ECO:0007669"/>
    <property type="project" value="UniProtKB-UniRule"/>
</dbReference>
<dbReference type="GO" id="GO:0050136">
    <property type="term" value="F:NADH:ubiquinone reductase (non-electrogenic) activity"/>
    <property type="evidence" value="ECO:0007669"/>
    <property type="project" value="RHEA"/>
</dbReference>
<dbReference type="GO" id="GO:0008753">
    <property type="term" value="F:NADPH dehydrogenase (quinone) activity"/>
    <property type="evidence" value="ECO:0007669"/>
    <property type="project" value="RHEA"/>
</dbReference>
<dbReference type="GO" id="GO:1901381">
    <property type="term" value="P:positive regulation of potassium ion transmembrane transport"/>
    <property type="evidence" value="ECO:0007669"/>
    <property type="project" value="UniProtKB-UniRule"/>
</dbReference>
<dbReference type="GO" id="GO:0006813">
    <property type="term" value="P:potassium ion transport"/>
    <property type="evidence" value="ECO:0007669"/>
    <property type="project" value="InterPro"/>
</dbReference>
<dbReference type="FunFam" id="3.40.50.360:FF:000008">
    <property type="entry name" value="Glutathione-regulated potassium-efflux system ancillary protein KefF"/>
    <property type="match status" value="1"/>
</dbReference>
<dbReference type="Gene3D" id="3.40.50.360">
    <property type="match status" value="1"/>
</dbReference>
<dbReference type="HAMAP" id="MF_01414">
    <property type="entry name" value="K_H_efflux_KefF"/>
    <property type="match status" value="1"/>
</dbReference>
<dbReference type="InterPro" id="IPR003680">
    <property type="entry name" value="Flavodoxin_fold"/>
</dbReference>
<dbReference type="InterPro" id="IPR029039">
    <property type="entry name" value="Flavoprotein-like_sf"/>
</dbReference>
<dbReference type="InterPro" id="IPR023948">
    <property type="entry name" value="K_H_efflux_KefF"/>
</dbReference>
<dbReference type="InterPro" id="IPR046980">
    <property type="entry name" value="KefG/KefF"/>
</dbReference>
<dbReference type="NCBIfam" id="NF002044">
    <property type="entry name" value="PRK00871.1"/>
    <property type="match status" value="1"/>
</dbReference>
<dbReference type="PANTHER" id="PTHR47307:SF2">
    <property type="entry name" value="GLUTATHIONE-REGULATED POTASSIUM-EFFLUX SYSTEM ANCILLARY PROTEIN KEFF"/>
    <property type="match status" value="1"/>
</dbReference>
<dbReference type="PANTHER" id="PTHR47307">
    <property type="entry name" value="GLUTATHIONE-REGULATED POTASSIUM-EFFLUX SYSTEM ANCILLARY PROTEIN KEFG"/>
    <property type="match status" value="1"/>
</dbReference>
<dbReference type="Pfam" id="PF02525">
    <property type="entry name" value="Flavodoxin_2"/>
    <property type="match status" value="1"/>
</dbReference>
<dbReference type="SUPFAM" id="SSF52218">
    <property type="entry name" value="Flavoproteins"/>
    <property type="match status" value="1"/>
</dbReference>
<feature type="chain" id="PRO_1000145565" description="Glutathione-regulated potassium-efflux system ancillary protein KefF">
    <location>
        <begin position="1"/>
        <end position="176"/>
    </location>
</feature>
<feature type="binding site" evidence="1">
    <location>
        <position position="8"/>
    </location>
    <ligand>
        <name>FMN</name>
        <dbReference type="ChEBI" id="CHEBI:58210"/>
    </ligand>
</feature>
<feature type="binding site" evidence="1">
    <location>
        <begin position="14"/>
        <end position="17"/>
    </location>
    <ligand>
        <name>FMN</name>
        <dbReference type="ChEBI" id="CHEBI:58210"/>
    </ligand>
</feature>
<feature type="binding site" evidence="1">
    <location>
        <begin position="65"/>
        <end position="68"/>
    </location>
    <ligand>
        <name>FMN</name>
        <dbReference type="ChEBI" id="CHEBI:58210"/>
    </ligand>
</feature>
<feature type="binding site" evidence="1">
    <location>
        <begin position="105"/>
        <end position="108"/>
    </location>
    <ligand>
        <name>FMN</name>
        <dbReference type="ChEBI" id="CHEBI:58210"/>
    </ligand>
</feature>
<comment type="function">
    <text evidence="1">Regulatory subunit of a potassium efflux system that confers protection against electrophiles. Required for full activity of KefC. Shows redox enzymatic activity, but this enzymatic activity is not required for activation of KefC.</text>
</comment>
<comment type="catalytic activity">
    <reaction evidence="1">
        <text>a quinone + NADH + H(+) = a quinol + NAD(+)</text>
        <dbReference type="Rhea" id="RHEA:46160"/>
        <dbReference type="ChEBI" id="CHEBI:15378"/>
        <dbReference type="ChEBI" id="CHEBI:24646"/>
        <dbReference type="ChEBI" id="CHEBI:57540"/>
        <dbReference type="ChEBI" id="CHEBI:57945"/>
        <dbReference type="ChEBI" id="CHEBI:132124"/>
        <dbReference type="EC" id="1.6.5.2"/>
    </reaction>
</comment>
<comment type="catalytic activity">
    <reaction evidence="1">
        <text>a quinone + NADPH + H(+) = a quinol + NADP(+)</text>
        <dbReference type="Rhea" id="RHEA:46164"/>
        <dbReference type="ChEBI" id="CHEBI:15378"/>
        <dbReference type="ChEBI" id="CHEBI:24646"/>
        <dbReference type="ChEBI" id="CHEBI:57783"/>
        <dbReference type="ChEBI" id="CHEBI:58349"/>
        <dbReference type="ChEBI" id="CHEBI:132124"/>
        <dbReference type="EC" id="1.6.5.2"/>
    </reaction>
</comment>
<comment type="cofactor">
    <cofactor evidence="1">
        <name>FMN</name>
        <dbReference type="ChEBI" id="CHEBI:58210"/>
    </cofactor>
</comment>
<comment type="subunit">
    <text evidence="1">Homodimer. Interacts with KefC.</text>
</comment>
<comment type="subcellular location">
    <subcellularLocation>
        <location evidence="1">Cell inner membrane</location>
        <topology evidence="1">Peripheral membrane protein</topology>
        <orientation evidence="1">Cytoplasmic side</orientation>
    </subcellularLocation>
</comment>
<comment type="similarity">
    <text evidence="1">Belongs to the NAD(P)H dehydrogenase (quinone) family. KefF subfamily.</text>
</comment>
<proteinExistence type="inferred from homology"/>
<evidence type="ECO:0000255" key="1">
    <source>
        <dbReference type="HAMAP-Rule" id="MF_01414"/>
    </source>
</evidence>
<organism>
    <name type="scientific">Salmonella enteritidis PT4 (strain P125109)</name>
    <dbReference type="NCBI Taxonomy" id="550537"/>
    <lineage>
        <taxon>Bacteria</taxon>
        <taxon>Pseudomonadati</taxon>
        <taxon>Pseudomonadota</taxon>
        <taxon>Gammaproteobacteria</taxon>
        <taxon>Enterobacterales</taxon>
        <taxon>Enterobacteriaceae</taxon>
        <taxon>Salmonella</taxon>
    </lineage>
</organism>